<accession>B1XMA0</accession>
<gene>
    <name evidence="1" type="primary">ruvB</name>
    <name type="ordered locus">SYNPCC7002_A1390</name>
</gene>
<sequence length="363" mass="39864">MAIKRNQGHGLPPKRDPALGRDALTTSQALPEDQEQSANEDRIRPQRLGDYLGQKDLKEVLGIAIAAAKARREPLDHMLLYGPPGLGKTTMSLILAAEMGVNCKITAAPALERPRDISGLLVGLEAGDILFIDEIHRLNRMAEELLYPAMEDGRLDVTIGKGVSARTRSIPLKPFTLIGATTKVGALTSPLRDRFGLIQRLRFYEVDELIAIVHRSALILEQPITPEGALEIARRARGTPRIANRLLRRIRDYAQVKGYGEISQTVAATALDLYNVDALGLDWTDRLILETMLNHFGGGPVGLEAIAAATGEDSKTIEEVYEPYLLQIGFLNRTPRGRIVSAKARQHLGLIPVEQSTQLDFLP</sequence>
<feature type="chain" id="PRO_1000089687" description="Holliday junction branch migration complex subunit RuvB">
    <location>
        <begin position="1"/>
        <end position="363"/>
    </location>
</feature>
<feature type="region of interest" description="Disordered" evidence="2">
    <location>
        <begin position="1"/>
        <end position="44"/>
    </location>
</feature>
<feature type="region of interest" description="Large ATPase domain (RuvB-L)" evidence="1">
    <location>
        <begin position="13"/>
        <end position="204"/>
    </location>
</feature>
<feature type="region of interest" description="Small ATPAse domain (RuvB-S)" evidence="1">
    <location>
        <begin position="205"/>
        <end position="275"/>
    </location>
</feature>
<feature type="region of interest" description="Head domain (RuvB-H)" evidence="1">
    <location>
        <begin position="278"/>
        <end position="363"/>
    </location>
</feature>
<feature type="binding site" evidence="1">
    <location>
        <position position="43"/>
    </location>
    <ligand>
        <name>ATP</name>
        <dbReference type="ChEBI" id="CHEBI:30616"/>
    </ligand>
</feature>
<feature type="binding site" evidence="1">
    <location>
        <position position="44"/>
    </location>
    <ligand>
        <name>ATP</name>
        <dbReference type="ChEBI" id="CHEBI:30616"/>
    </ligand>
</feature>
<feature type="binding site" evidence="1">
    <location>
        <position position="85"/>
    </location>
    <ligand>
        <name>ATP</name>
        <dbReference type="ChEBI" id="CHEBI:30616"/>
    </ligand>
</feature>
<feature type="binding site" evidence="1">
    <location>
        <position position="88"/>
    </location>
    <ligand>
        <name>ATP</name>
        <dbReference type="ChEBI" id="CHEBI:30616"/>
    </ligand>
</feature>
<feature type="binding site" evidence="1">
    <location>
        <position position="89"/>
    </location>
    <ligand>
        <name>ATP</name>
        <dbReference type="ChEBI" id="CHEBI:30616"/>
    </ligand>
</feature>
<feature type="binding site" evidence="1">
    <location>
        <position position="89"/>
    </location>
    <ligand>
        <name>Mg(2+)</name>
        <dbReference type="ChEBI" id="CHEBI:18420"/>
    </ligand>
</feature>
<feature type="binding site" evidence="1">
    <location>
        <position position="90"/>
    </location>
    <ligand>
        <name>ATP</name>
        <dbReference type="ChEBI" id="CHEBI:30616"/>
    </ligand>
</feature>
<feature type="binding site" evidence="1">
    <location>
        <position position="194"/>
    </location>
    <ligand>
        <name>ATP</name>
        <dbReference type="ChEBI" id="CHEBI:30616"/>
    </ligand>
</feature>
<feature type="binding site" evidence="1">
    <location>
        <position position="204"/>
    </location>
    <ligand>
        <name>ATP</name>
        <dbReference type="ChEBI" id="CHEBI:30616"/>
    </ligand>
</feature>
<feature type="binding site" evidence="1">
    <location>
        <position position="241"/>
    </location>
    <ligand>
        <name>ATP</name>
        <dbReference type="ChEBI" id="CHEBI:30616"/>
    </ligand>
</feature>
<feature type="binding site" evidence="1">
    <location>
        <position position="333"/>
    </location>
    <ligand>
        <name>DNA</name>
        <dbReference type="ChEBI" id="CHEBI:16991"/>
    </ligand>
</feature>
<feature type="binding site" evidence="1">
    <location>
        <position position="338"/>
    </location>
    <ligand>
        <name>DNA</name>
        <dbReference type="ChEBI" id="CHEBI:16991"/>
    </ligand>
</feature>
<dbReference type="EC" id="3.6.4.-" evidence="1"/>
<dbReference type="EMBL" id="CP000951">
    <property type="protein sequence ID" value="ACA99386.1"/>
    <property type="molecule type" value="Genomic_DNA"/>
</dbReference>
<dbReference type="RefSeq" id="WP_012307009.1">
    <property type="nucleotide sequence ID" value="NZ_JAHHPU010000001.1"/>
</dbReference>
<dbReference type="SMR" id="B1XMA0"/>
<dbReference type="STRING" id="32049.SYNPCC7002_A1390"/>
<dbReference type="KEGG" id="syp:SYNPCC7002_A1390"/>
<dbReference type="eggNOG" id="COG2255">
    <property type="taxonomic scope" value="Bacteria"/>
</dbReference>
<dbReference type="HOGENOM" id="CLU_055599_1_0_3"/>
<dbReference type="Proteomes" id="UP000001688">
    <property type="component" value="Chromosome"/>
</dbReference>
<dbReference type="GO" id="GO:0005737">
    <property type="term" value="C:cytoplasm"/>
    <property type="evidence" value="ECO:0007669"/>
    <property type="project" value="UniProtKB-SubCell"/>
</dbReference>
<dbReference type="GO" id="GO:0048476">
    <property type="term" value="C:Holliday junction resolvase complex"/>
    <property type="evidence" value="ECO:0007669"/>
    <property type="project" value="UniProtKB-UniRule"/>
</dbReference>
<dbReference type="GO" id="GO:0005524">
    <property type="term" value="F:ATP binding"/>
    <property type="evidence" value="ECO:0007669"/>
    <property type="project" value="UniProtKB-UniRule"/>
</dbReference>
<dbReference type="GO" id="GO:0016887">
    <property type="term" value="F:ATP hydrolysis activity"/>
    <property type="evidence" value="ECO:0007669"/>
    <property type="project" value="InterPro"/>
</dbReference>
<dbReference type="GO" id="GO:0000400">
    <property type="term" value="F:four-way junction DNA binding"/>
    <property type="evidence" value="ECO:0007669"/>
    <property type="project" value="UniProtKB-UniRule"/>
</dbReference>
<dbReference type="GO" id="GO:0009378">
    <property type="term" value="F:four-way junction helicase activity"/>
    <property type="evidence" value="ECO:0007669"/>
    <property type="project" value="InterPro"/>
</dbReference>
<dbReference type="GO" id="GO:0006310">
    <property type="term" value="P:DNA recombination"/>
    <property type="evidence" value="ECO:0007669"/>
    <property type="project" value="UniProtKB-UniRule"/>
</dbReference>
<dbReference type="GO" id="GO:0006281">
    <property type="term" value="P:DNA repair"/>
    <property type="evidence" value="ECO:0007669"/>
    <property type="project" value="UniProtKB-UniRule"/>
</dbReference>
<dbReference type="CDD" id="cd00009">
    <property type="entry name" value="AAA"/>
    <property type="match status" value="1"/>
</dbReference>
<dbReference type="Gene3D" id="1.10.8.60">
    <property type="match status" value="1"/>
</dbReference>
<dbReference type="Gene3D" id="3.40.50.300">
    <property type="entry name" value="P-loop containing nucleotide triphosphate hydrolases"/>
    <property type="match status" value="1"/>
</dbReference>
<dbReference type="Gene3D" id="1.10.10.10">
    <property type="entry name" value="Winged helix-like DNA-binding domain superfamily/Winged helix DNA-binding domain"/>
    <property type="match status" value="1"/>
</dbReference>
<dbReference type="HAMAP" id="MF_00016">
    <property type="entry name" value="DNA_HJ_migration_RuvB"/>
    <property type="match status" value="1"/>
</dbReference>
<dbReference type="InterPro" id="IPR003593">
    <property type="entry name" value="AAA+_ATPase"/>
</dbReference>
<dbReference type="InterPro" id="IPR041445">
    <property type="entry name" value="AAA_lid_4"/>
</dbReference>
<dbReference type="InterPro" id="IPR004605">
    <property type="entry name" value="DNA_helicase_Holl-junc_RuvB"/>
</dbReference>
<dbReference type="InterPro" id="IPR027417">
    <property type="entry name" value="P-loop_NTPase"/>
</dbReference>
<dbReference type="InterPro" id="IPR008824">
    <property type="entry name" value="RuvB-like_N"/>
</dbReference>
<dbReference type="InterPro" id="IPR008823">
    <property type="entry name" value="RuvB_C"/>
</dbReference>
<dbReference type="InterPro" id="IPR036388">
    <property type="entry name" value="WH-like_DNA-bd_sf"/>
</dbReference>
<dbReference type="InterPro" id="IPR036390">
    <property type="entry name" value="WH_DNA-bd_sf"/>
</dbReference>
<dbReference type="NCBIfam" id="NF000868">
    <property type="entry name" value="PRK00080.1"/>
    <property type="match status" value="1"/>
</dbReference>
<dbReference type="NCBIfam" id="TIGR00635">
    <property type="entry name" value="ruvB"/>
    <property type="match status" value="1"/>
</dbReference>
<dbReference type="PANTHER" id="PTHR42848">
    <property type="match status" value="1"/>
</dbReference>
<dbReference type="PANTHER" id="PTHR42848:SF1">
    <property type="entry name" value="HOLLIDAY JUNCTION BRANCH MIGRATION COMPLEX SUBUNIT RUVB"/>
    <property type="match status" value="1"/>
</dbReference>
<dbReference type="Pfam" id="PF17864">
    <property type="entry name" value="AAA_lid_4"/>
    <property type="match status" value="1"/>
</dbReference>
<dbReference type="Pfam" id="PF05491">
    <property type="entry name" value="RuvB_C"/>
    <property type="match status" value="1"/>
</dbReference>
<dbReference type="Pfam" id="PF05496">
    <property type="entry name" value="RuvB_N"/>
    <property type="match status" value="1"/>
</dbReference>
<dbReference type="SMART" id="SM00382">
    <property type="entry name" value="AAA"/>
    <property type="match status" value="1"/>
</dbReference>
<dbReference type="SUPFAM" id="SSF52540">
    <property type="entry name" value="P-loop containing nucleoside triphosphate hydrolases"/>
    <property type="match status" value="1"/>
</dbReference>
<dbReference type="SUPFAM" id="SSF46785">
    <property type="entry name" value="Winged helix' DNA-binding domain"/>
    <property type="match status" value="1"/>
</dbReference>
<protein>
    <recommendedName>
        <fullName evidence="1">Holliday junction branch migration complex subunit RuvB</fullName>
        <ecNumber evidence="1">3.6.4.-</ecNumber>
    </recommendedName>
</protein>
<reference key="1">
    <citation type="submission" date="2008-02" db="EMBL/GenBank/DDBJ databases">
        <title>Complete sequence of Synechococcus sp. PCC 7002.</title>
        <authorList>
            <person name="Li T."/>
            <person name="Zhao J."/>
            <person name="Zhao C."/>
            <person name="Liu Z."/>
            <person name="Zhao F."/>
            <person name="Marquardt J."/>
            <person name="Nomura C.T."/>
            <person name="Persson S."/>
            <person name="Detter J.C."/>
            <person name="Richardson P.M."/>
            <person name="Lanz C."/>
            <person name="Schuster S.C."/>
            <person name="Wang J."/>
            <person name="Li S."/>
            <person name="Huang X."/>
            <person name="Cai T."/>
            <person name="Yu Z."/>
            <person name="Luo J."/>
            <person name="Zhao J."/>
            <person name="Bryant D.A."/>
        </authorList>
    </citation>
    <scope>NUCLEOTIDE SEQUENCE [LARGE SCALE GENOMIC DNA]</scope>
    <source>
        <strain>ATCC 27264 / PCC 7002 / PR-6</strain>
    </source>
</reference>
<keyword id="KW-0067">ATP-binding</keyword>
<keyword id="KW-0963">Cytoplasm</keyword>
<keyword id="KW-0227">DNA damage</keyword>
<keyword id="KW-0233">DNA recombination</keyword>
<keyword id="KW-0234">DNA repair</keyword>
<keyword id="KW-0238">DNA-binding</keyword>
<keyword id="KW-0378">Hydrolase</keyword>
<keyword id="KW-0547">Nucleotide-binding</keyword>
<keyword id="KW-1185">Reference proteome</keyword>
<comment type="function">
    <text evidence="1">The RuvA-RuvB-RuvC complex processes Holliday junction (HJ) DNA during genetic recombination and DNA repair, while the RuvA-RuvB complex plays an important role in the rescue of blocked DNA replication forks via replication fork reversal (RFR). RuvA specifically binds to HJ cruciform DNA, conferring on it an open structure. The RuvB hexamer acts as an ATP-dependent pump, pulling dsDNA into and through the RuvAB complex. RuvB forms 2 homohexamers on either side of HJ DNA bound by 1 or 2 RuvA tetramers; 4 subunits per hexamer contact DNA at a time. Coordinated motions by a converter formed by DNA-disengaged RuvB subunits stimulates ATP hydrolysis and nucleotide exchange. Immobilization of the converter enables RuvB to convert the ATP-contained energy into a lever motion, pulling 2 nucleotides of DNA out of the RuvA tetramer per ATP hydrolyzed, thus driving DNA branch migration. The RuvB motors rotate together with the DNA substrate, which together with the progressing nucleotide cycle form the mechanistic basis for DNA recombination by continuous HJ branch migration. Branch migration allows RuvC to scan DNA until it finds its consensus sequence, where it cleaves and resolves cruciform DNA.</text>
</comment>
<comment type="catalytic activity">
    <reaction evidence="1">
        <text>ATP + H2O = ADP + phosphate + H(+)</text>
        <dbReference type="Rhea" id="RHEA:13065"/>
        <dbReference type="ChEBI" id="CHEBI:15377"/>
        <dbReference type="ChEBI" id="CHEBI:15378"/>
        <dbReference type="ChEBI" id="CHEBI:30616"/>
        <dbReference type="ChEBI" id="CHEBI:43474"/>
        <dbReference type="ChEBI" id="CHEBI:456216"/>
    </reaction>
</comment>
<comment type="subunit">
    <text evidence="1">Homohexamer. Forms an RuvA(8)-RuvB(12)-Holliday junction (HJ) complex. HJ DNA is sandwiched between 2 RuvA tetramers; dsDNA enters through RuvA and exits via RuvB. An RuvB hexamer assembles on each DNA strand where it exits the tetramer. Each RuvB hexamer is contacted by two RuvA subunits (via domain III) on 2 adjacent RuvB subunits; this complex drives branch migration. In the full resolvosome a probable DNA-RuvA(4)-RuvB(12)-RuvC(2) complex forms which resolves the HJ.</text>
</comment>
<comment type="subcellular location">
    <subcellularLocation>
        <location evidence="1">Cytoplasm</location>
    </subcellularLocation>
</comment>
<comment type="domain">
    <text evidence="1">Has 3 domains, the large (RuvB-L) and small ATPase (RuvB-S) domains and the C-terminal head (RuvB-H) domain. The head domain binds DNA, while the ATPase domains jointly bind ATP, ADP or are empty depending on the state of the subunit in the translocation cycle. During a single DNA translocation step the structure of each domain remains the same, but their relative positions change.</text>
</comment>
<comment type="similarity">
    <text evidence="1">Belongs to the RuvB family.</text>
</comment>
<proteinExistence type="inferred from homology"/>
<evidence type="ECO:0000255" key="1">
    <source>
        <dbReference type="HAMAP-Rule" id="MF_00016"/>
    </source>
</evidence>
<evidence type="ECO:0000256" key="2">
    <source>
        <dbReference type="SAM" id="MobiDB-lite"/>
    </source>
</evidence>
<organism>
    <name type="scientific">Picosynechococcus sp. (strain ATCC 27264 / PCC 7002 / PR-6)</name>
    <name type="common">Agmenellum quadruplicatum</name>
    <dbReference type="NCBI Taxonomy" id="32049"/>
    <lineage>
        <taxon>Bacteria</taxon>
        <taxon>Bacillati</taxon>
        <taxon>Cyanobacteriota</taxon>
        <taxon>Cyanophyceae</taxon>
        <taxon>Oscillatoriophycideae</taxon>
        <taxon>Chroococcales</taxon>
        <taxon>Geminocystaceae</taxon>
        <taxon>Picosynechococcus</taxon>
    </lineage>
</organism>
<name>RUVB_PICP2</name>